<protein>
    <recommendedName>
        <fullName evidence="2">Desumoylating isopeptidase 1</fullName>
        <shortName evidence="2">DeSI-1</shortName>
        <ecNumber evidence="2">3.4.-.-</ecNumber>
    </recommendedName>
    <alternativeName>
        <fullName>PPPDE peptidase domain-containing protein 2</fullName>
    </alternativeName>
    <alternativeName>
        <fullName>Palmitoyl protein thioesterase DESI1</fullName>
        <ecNumber evidence="1">3.1.2.22</ecNumber>
    </alternativeName>
    <alternativeName>
        <fullName>S-depalmitoylase DESI1</fullName>
    </alternativeName>
</protein>
<dbReference type="EC" id="3.4.-.-" evidence="2"/>
<dbReference type="EC" id="3.1.2.22" evidence="1"/>
<dbReference type="EMBL" id="BC074444">
    <property type="protein sequence ID" value="AAH74444.1"/>
    <property type="molecule type" value="mRNA"/>
</dbReference>
<dbReference type="RefSeq" id="NP_001086298.1">
    <property type="nucleotide sequence ID" value="NM_001092829.1"/>
</dbReference>
<dbReference type="SMR" id="Q6GLM5"/>
<dbReference type="MEROPS" id="C97.001"/>
<dbReference type="DNASU" id="444727"/>
<dbReference type="GeneID" id="444727"/>
<dbReference type="KEGG" id="xla:444727"/>
<dbReference type="AGR" id="Xenbase:XB-GENE-998986"/>
<dbReference type="CTD" id="444727"/>
<dbReference type="Xenbase" id="XB-GENE-998986">
    <property type="gene designation" value="desi1.L"/>
</dbReference>
<dbReference type="OrthoDB" id="21221at2759"/>
<dbReference type="Proteomes" id="UP000186698">
    <property type="component" value="Chromosome 4L"/>
</dbReference>
<dbReference type="Bgee" id="444727">
    <property type="expression patterns" value="Expressed in egg cell and 19 other cell types or tissues"/>
</dbReference>
<dbReference type="GO" id="GO:0005737">
    <property type="term" value="C:cytoplasm"/>
    <property type="evidence" value="ECO:0007669"/>
    <property type="project" value="UniProtKB-SubCell"/>
</dbReference>
<dbReference type="GO" id="GO:0005634">
    <property type="term" value="C:nucleus"/>
    <property type="evidence" value="ECO:0007669"/>
    <property type="project" value="UniProtKB-SubCell"/>
</dbReference>
<dbReference type="GO" id="GO:0052816">
    <property type="term" value="F:long-chain fatty acyl-CoA hydrolase activity"/>
    <property type="evidence" value="ECO:0000250"/>
    <property type="project" value="UniProtKB"/>
</dbReference>
<dbReference type="GO" id="GO:0008474">
    <property type="term" value="F:palmitoyl-(protein) hydrolase activity"/>
    <property type="evidence" value="ECO:0007669"/>
    <property type="project" value="RHEA"/>
</dbReference>
<dbReference type="GO" id="GO:0008233">
    <property type="term" value="F:peptidase activity"/>
    <property type="evidence" value="ECO:0007669"/>
    <property type="project" value="UniProtKB-KW"/>
</dbReference>
<dbReference type="GO" id="GO:0006611">
    <property type="term" value="P:protein export from nucleus"/>
    <property type="evidence" value="ECO:0000318"/>
    <property type="project" value="GO_Central"/>
</dbReference>
<dbReference type="GO" id="GO:0070646">
    <property type="term" value="P:protein modification by small protein removal"/>
    <property type="evidence" value="ECO:0007669"/>
    <property type="project" value="TreeGrafter"/>
</dbReference>
<dbReference type="GO" id="GO:0006508">
    <property type="term" value="P:proteolysis"/>
    <property type="evidence" value="ECO:0007669"/>
    <property type="project" value="UniProtKB-KW"/>
</dbReference>
<dbReference type="GO" id="GO:0032434">
    <property type="term" value="P:regulation of proteasomal ubiquitin-dependent protein catabolic process"/>
    <property type="evidence" value="ECO:0000318"/>
    <property type="project" value="GO_Central"/>
</dbReference>
<dbReference type="Gene3D" id="3.90.1720.30">
    <property type="entry name" value="PPPDE domains"/>
    <property type="match status" value="1"/>
</dbReference>
<dbReference type="InterPro" id="IPR008580">
    <property type="entry name" value="PPPDE_dom"/>
</dbReference>
<dbReference type="InterPro" id="IPR042266">
    <property type="entry name" value="PPPDE_sf"/>
</dbReference>
<dbReference type="PANTHER" id="PTHR12378">
    <property type="entry name" value="DESUMOYLATING ISOPEPTIDASE"/>
    <property type="match status" value="1"/>
</dbReference>
<dbReference type="PANTHER" id="PTHR12378:SF7">
    <property type="entry name" value="DESUMOYLATING ISOPEPTIDASE 1"/>
    <property type="match status" value="1"/>
</dbReference>
<dbReference type="Pfam" id="PF05903">
    <property type="entry name" value="Peptidase_C97"/>
    <property type="match status" value="1"/>
</dbReference>
<dbReference type="SMART" id="SM01179">
    <property type="entry name" value="DUF862"/>
    <property type="match status" value="1"/>
</dbReference>
<dbReference type="PROSITE" id="PS51858">
    <property type="entry name" value="PPPDE"/>
    <property type="match status" value="1"/>
</dbReference>
<comment type="function">
    <text evidence="1 2">Protease which deconjugates SUMO1, SUMO2 and SUMO3 from some substrate proteins (By similarity). Has isopeptidase but not SUMO-processing activity (By similarity). Collaborates with ubqln4 in the export of ubiquitinated proteins from the nucleus to the cytoplasm (By similarity). Exhibits palmitoyl protein thioesterase (S-depalmitoylation) activity towards synthetic substrates 4-methylumbelliferyl-6-S-palmitoyl-beta-D-glucopyranoside and S-depalmitoylation probe 5 (DPP-5) (By similarity).</text>
</comment>
<comment type="catalytic activity">
    <reaction evidence="1">
        <text>S-hexadecanoyl-L-cysteinyl-[protein] + H2O = L-cysteinyl-[protein] + hexadecanoate + H(+)</text>
        <dbReference type="Rhea" id="RHEA:19233"/>
        <dbReference type="Rhea" id="RHEA-COMP:10131"/>
        <dbReference type="Rhea" id="RHEA-COMP:11032"/>
        <dbReference type="ChEBI" id="CHEBI:7896"/>
        <dbReference type="ChEBI" id="CHEBI:15377"/>
        <dbReference type="ChEBI" id="CHEBI:15378"/>
        <dbReference type="ChEBI" id="CHEBI:29950"/>
        <dbReference type="ChEBI" id="CHEBI:74151"/>
        <dbReference type="EC" id="3.1.2.22"/>
    </reaction>
    <physiologicalReaction direction="left-to-right" evidence="1">
        <dbReference type="Rhea" id="RHEA:19234"/>
    </physiologicalReaction>
</comment>
<comment type="subunit">
    <text evidence="2">Homodimer.</text>
</comment>
<comment type="subcellular location">
    <subcellularLocation>
        <location evidence="2">Cytoplasm</location>
    </subcellularLocation>
    <subcellularLocation>
        <location evidence="2">Nucleus</location>
    </subcellularLocation>
</comment>
<comment type="similarity">
    <text evidence="4">Belongs to the DeSI family.</text>
</comment>
<evidence type="ECO:0000250" key="1">
    <source>
        <dbReference type="UniProtKB" id="Q6ICB0"/>
    </source>
</evidence>
<evidence type="ECO:0000250" key="2">
    <source>
        <dbReference type="UniProtKB" id="Q9CQT7"/>
    </source>
</evidence>
<evidence type="ECO:0000255" key="3">
    <source>
        <dbReference type="PROSITE-ProRule" id="PRU01205"/>
    </source>
</evidence>
<evidence type="ECO:0000305" key="4"/>
<gene>
    <name evidence="2" type="primary">desi1</name>
    <name type="synonym">fam152b</name>
    <name type="synonym">pppde2</name>
</gene>
<keyword id="KW-0963">Cytoplasm</keyword>
<keyword id="KW-0378">Hydrolase</keyword>
<keyword id="KW-0539">Nucleus</keyword>
<keyword id="KW-0645">Protease</keyword>
<keyword id="KW-1185">Reference proteome</keyword>
<proteinExistence type="evidence at transcript level"/>
<reference key="1">
    <citation type="submission" date="2004-06" db="EMBL/GenBank/DDBJ databases">
        <authorList>
            <consortium name="NIH - Xenopus Gene Collection (XGC) project"/>
        </authorList>
    </citation>
    <scope>NUCLEOTIDE SEQUENCE [LARGE SCALE MRNA]</scope>
    <source>
        <tissue>Eye</tissue>
    </source>
</reference>
<feature type="chain" id="PRO_0000318153" description="Desumoylating isopeptidase 1">
    <location>
        <begin position="1"/>
        <end position="169"/>
    </location>
</feature>
<feature type="domain" description="PPPDE" evidence="3">
    <location>
        <begin position="8"/>
        <end position="150"/>
    </location>
</feature>
<feature type="short sequence motif" description="Nuclear export signal 1" evidence="1">
    <location>
        <begin position="84"/>
        <end position="92"/>
    </location>
</feature>
<feature type="short sequence motif" description="Nuclear export signal 2" evidence="1">
    <location>
        <begin position="140"/>
        <end position="154"/>
    </location>
</feature>
<feature type="active site" evidence="3">
    <location>
        <position position="39"/>
    </location>
</feature>
<feature type="active site" evidence="3">
    <location>
        <position position="109"/>
    </location>
</feature>
<sequence length="169" mass="18737">METAEGPHLVRLYVYDMSRGLARRLSPVMLGKQLEGIWHTSIIVFDEEFFYGREGITSCLPGRTMLGEPDSVMELGITEVTEEIFLEYLSSLGESGFSGESYHLFDHNCNTFSNEVAQFLTGKKIPSYITELPSEVLSTPLGQALRPLLDSVQIQPAGGNIFNRQSGPS</sequence>
<accession>Q6GLM5</accession>
<name>DESI1_XENLA</name>
<organism>
    <name type="scientific">Xenopus laevis</name>
    <name type="common">African clawed frog</name>
    <dbReference type="NCBI Taxonomy" id="8355"/>
    <lineage>
        <taxon>Eukaryota</taxon>
        <taxon>Metazoa</taxon>
        <taxon>Chordata</taxon>
        <taxon>Craniata</taxon>
        <taxon>Vertebrata</taxon>
        <taxon>Euteleostomi</taxon>
        <taxon>Amphibia</taxon>
        <taxon>Batrachia</taxon>
        <taxon>Anura</taxon>
        <taxon>Pipoidea</taxon>
        <taxon>Pipidae</taxon>
        <taxon>Xenopodinae</taxon>
        <taxon>Xenopus</taxon>
        <taxon>Xenopus</taxon>
    </lineage>
</organism>